<reference key="1">
    <citation type="journal article" date="1994" name="Arch. Biochem. Biophys.">
        <title>Molecular cloning of isoflavone reductase from pea (Pisum sativum L.): evidence for a 3R-isoflavanone intermediate in (+)-pisatin biosynthesis.</title>
        <authorList>
            <person name="Paiva N.L."/>
            <person name="Sun Y."/>
            <person name="Dixon R.A."/>
            <person name="Vanetten H.D."/>
            <person name="Hrazdina G."/>
        </authorList>
    </citation>
    <scope>NUCLEOTIDE SEQUENCE [MRNA]</scope>
    <source>
        <strain>cv. Alaska Green</strain>
    </source>
</reference>
<organism>
    <name type="scientific">Pisum sativum</name>
    <name type="common">Garden pea</name>
    <name type="synonym">Lathyrus oleraceus</name>
    <dbReference type="NCBI Taxonomy" id="3888"/>
    <lineage>
        <taxon>Eukaryota</taxon>
        <taxon>Viridiplantae</taxon>
        <taxon>Streptophyta</taxon>
        <taxon>Embryophyta</taxon>
        <taxon>Tracheophyta</taxon>
        <taxon>Spermatophyta</taxon>
        <taxon>Magnoliopsida</taxon>
        <taxon>eudicotyledons</taxon>
        <taxon>Gunneridae</taxon>
        <taxon>Pentapetalae</taxon>
        <taxon>rosids</taxon>
        <taxon>fabids</taxon>
        <taxon>Fabales</taxon>
        <taxon>Fabaceae</taxon>
        <taxon>Papilionoideae</taxon>
        <taxon>50 kb inversion clade</taxon>
        <taxon>NPAAA clade</taxon>
        <taxon>Hologalegina</taxon>
        <taxon>IRL clade</taxon>
        <taxon>Fabeae</taxon>
        <taxon>Pisum</taxon>
    </lineage>
</organism>
<comment type="function">
    <text>Reduces achiral isoflavones to chiral isoflavanones during the biosynthesis of chiral pterocarpan phytoalexins. The reduction product (sophrol) is a third isomer, which represents the penultimate intermediate in the synthesis of the phytoalexin (+)-pisatin, the major phytoalexin in pea.</text>
</comment>
<comment type="catalytic activity">
    <reaction>
        <text>(3R)-vestitone + NADP(+) = 2'-hydroxyformononetin + NADPH + 2 H(+)</text>
        <dbReference type="Rhea" id="RHEA:22560"/>
        <dbReference type="ChEBI" id="CHEBI:15378"/>
        <dbReference type="ChEBI" id="CHEBI:16786"/>
        <dbReference type="ChEBI" id="CHEBI:57783"/>
        <dbReference type="ChEBI" id="CHEBI:58349"/>
        <dbReference type="ChEBI" id="CHEBI:77687"/>
        <dbReference type="EC" id="1.3.1.45"/>
    </reaction>
</comment>
<comment type="pathway">
    <text>Phytoalexin biosynthesis; pterocarpan phytoalexin biosynthesis.</text>
</comment>
<comment type="similarity">
    <text evidence="2">Belongs to the NmrA-type oxidoreductase family. Isoflavone reductase subfamily.</text>
</comment>
<keyword id="KW-0521">NADP</keyword>
<keyword id="KW-0560">Oxidoreductase</keyword>
<protein>
    <recommendedName>
        <fullName>Isoflavone reductase</fullName>
        <shortName>IFR</shortName>
        <ecNumber>1.3.1.45</ecNumber>
    </recommendedName>
    <alternativeName>
        <fullName>2'-hydroxyisoflavone reductase</fullName>
    </alternativeName>
    <alternativeName>
        <fullName>NADPH:isoflavone oxidoreductase</fullName>
    </alternativeName>
</protein>
<name>IFR_PEA</name>
<proteinExistence type="evidence at transcript level"/>
<evidence type="ECO:0000250" key="1">
    <source>
        <dbReference type="UniProtKB" id="Q9LD14"/>
    </source>
</evidence>
<evidence type="ECO:0000305" key="2"/>
<gene>
    <name type="primary">IFR</name>
</gene>
<sequence length="318" mass="35429">MATENKILILGATGAIGRHIVWASIKAGNPTYALVRKTSDNVNKPKLTEAANPETKEELLKNYQASGVILLEGDINDHETLVNAIKQVDTVICAAGRLLIEDQVKVIKAIKEAGNVKRFFPSEFGLDVDRHDAVEPVRQVFEEKASIRRVVESEGVPYTYLCCHAFTGYFLRNLAQIDATDPPRDKVVILGDGNVRGAYVTEADVGTYTIRAANDPNTLNKAVHIRLPNNYLTANEVIALWEKKIGKTLEKTYVSEEQVLKDIQTSSFPHNYLLALYHSQQIKGDAVYEIDPAKDVEAYDAYPDVKYTTADEYLNQFV</sequence>
<accession>P52576</accession>
<feature type="chain" id="PRO_0000204547" description="Isoflavone reductase">
    <location>
        <begin position="1"/>
        <end position="318"/>
    </location>
</feature>
<feature type="active site" description="Proton acceptor" evidence="1">
    <location>
        <position position="144"/>
    </location>
</feature>
<feature type="binding site" evidence="1">
    <location>
        <begin position="11"/>
        <end position="17"/>
    </location>
    <ligand>
        <name>NADP(+)</name>
        <dbReference type="ChEBI" id="CHEBI:58349"/>
    </ligand>
</feature>
<feature type="binding site" evidence="1">
    <location>
        <position position="36"/>
    </location>
    <ligand>
        <name>NADP(+)</name>
        <dbReference type="ChEBI" id="CHEBI:58349"/>
    </ligand>
</feature>
<feature type="binding site" evidence="1">
    <location>
        <position position="44"/>
    </location>
    <ligand>
        <name>NADP(+)</name>
        <dbReference type="ChEBI" id="CHEBI:58349"/>
    </ligand>
</feature>
<feature type="binding site" evidence="1">
    <location>
        <position position="148"/>
    </location>
    <ligand>
        <name>NADP(+)</name>
        <dbReference type="ChEBI" id="CHEBI:58349"/>
    </ligand>
</feature>
<dbReference type="EC" id="1.3.1.45"/>
<dbReference type="EMBL" id="S72472">
    <property type="protein sequence ID" value="AAB31368.1"/>
    <property type="molecule type" value="mRNA"/>
</dbReference>
<dbReference type="PIR" id="S48631">
    <property type="entry name" value="S48631"/>
</dbReference>
<dbReference type="SMR" id="P52576"/>
<dbReference type="UniPathway" id="UPA00901"/>
<dbReference type="GO" id="GO:0047526">
    <property type="term" value="F:2'-hydroxyisoflavone reductase activity"/>
    <property type="evidence" value="ECO:0007669"/>
    <property type="project" value="UniProtKB-EC"/>
</dbReference>
<dbReference type="GO" id="GO:0009807">
    <property type="term" value="P:lignan biosynthetic process"/>
    <property type="evidence" value="ECO:0007669"/>
    <property type="project" value="UniProtKB-ARBA"/>
</dbReference>
<dbReference type="CDD" id="cd05259">
    <property type="entry name" value="PCBER_SDR_a"/>
    <property type="match status" value="1"/>
</dbReference>
<dbReference type="Gene3D" id="3.40.50.720">
    <property type="entry name" value="NAD(P)-binding Rossmann-like Domain"/>
    <property type="match status" value="1"/>
</dbReference>
<dbReference type="Gene3D" id="3.90.25.10">
    <property type="entry name" value="UDP-galactose 4-epimerase, domain 1"/>
    <property type="match status" value="1"/>
</dbReference>
<dbReference type="InterPro" id="IPR036291">
    <property type="entry name" value="NAD(P)-bd_dom_sf"/>
</dbReference>
<dbReference type="InterPro" id="IPR008030">
    <property type="entry name" value="NmrA-like"/>
</dbReference>
<dbReference type="InterPro" id="IPR050608">
    <property type="entry name" value="NmrA-type/Isoflavone_red_sf"/>
</dbReference>
<dbReference type="InterPro" id="IPR045312">
    <property type="entry name" value="PCBER-like"/>
</dbReference>
<dbReference type="PANTHER" id="PTHR43349:SF53">
    <property type="entry name" value="ISOFLAVONE REDUCTASE"/>
    <property type="match status" value="1"/>
</dbReference>
<dbReference type="PANTHER" id="PTHR43349">
    <property type="entry name" value="PINORESINOL REDUCTASE-RELATED"/>
    <property type="match status" value="1"/>
</dbReference>
<dbReference type="Pfam" id="PF05368">
    <property type="entry name" value="NmrA"/>
    <property type="match status" value="1"/>
</dbReference>
<dbReference type="SUPFAM" id="SSF51735">
    <property type="entry name" value="NAD(P)-binding Rossmann-fold domains"/>
    <property type="match status" value="1"/>
</dbReference>